<comment type="function">
    <text evidence="1">Involved in coproporphyrin-dependent heme b biosynthesis. Catalyzes the decarboxylation of Fe-coproporphyrin III (coproheme) to heme b (protoheme IX), the last step of the pathway. The reaction occurs in a stepwise manner with a three-propionate intermediate.</text>
</comment>
<comment type="catalytic activity">
    <reaction evidence="1">
        <text>Fe-coproporphyrin III + 2 H2O2 + 2 H(+) = heme b + 2 CO2 + 4 H2O</text>
        <dbReference type="Rhea" id="RHEA:56516"/>
        <dbReference type="ChEBI" id="CHEBI:15377"/>
        <dbReference type="ChEBI" id="CHEBI:15378"/>
        <dbReference type="ChEBI" id="CHEBI:16240"/>
        <dbReference type="ChEBI" id="CHEBI:16526"/>
        <dbReference type="ChEBI" id="CHEBI:60344"/>
        <dbReference type="ChEBI" id="CHEBI:68438"/>
        <dbReference type="EC" id="1.3.98.5"/>
    </reaction>
    <physiologicalReaction direction="left-to-right" evidence="1">
        <dbReference type="Rhea" id="RHEA:56517"/>
    </physiologicalReaction>
</comment>
<comment type="catalytic activity">
    <reaction evidence="1">
        <text>Fe-coproporphyrin III + H2O2 + H(+) = harderoheme III + CO2 + 2 H2O</text>
        <dbReference type="Rhea" id="RHEA:57940"/>
        <dbReference type="ChEBI" id="CHEBI:15377"/>
        <dbReference type="ChEBI" id="CHEBI:15378"/>
        <dbReference type="ChEBI" id="CHEBI:16240"/>
        <dbReference type="ChEBI" id="CHEBI:16526"/>
        <dbReference type="ChEBI" id="CHEBI:68438"/>
        <dbReference type="ChEBI" id="CHEBI:142463"/>
    </reaction>
    <physiologicalReaction direction="left-to-right" evidence="1">
        <dbReference type="Rhea" id="RHEA:57941"/>
    </physiologicalReaction>
</comment>
<comment type="catalytic activity">
    <reaction evidence="1">
        <text>harderoheme III + H2O2 + H(+) = heme b + CO2 + 2 H2O</text>
        <dbReference type="Rhea" id="RHEA:57944"/>
        <dbReference type="ChEBI" id="CHEBI:15377"/>
        <dbReference type="ChEBI" id="CHEBI:15378"/>
        <dbReference type="ChEBI" id="CHEBI:16240"/>
        <dbReference type="ChEBI" id="CHEBI:16526"/>
        <dbReference type="ChEBI" id="CHEBI:60344"/>
        <dbReference type="ChEBI" id="CHEBI:142463"/>
    </reaction>
    <physiologicalReaction direction="left-to-right" evidence="1">
        <dbReference type="Rhea" id="RHEA:57945"/>
    </physiologicalReaction>
</comment>
<comment type="cofactor">
    <cofactor evidence="1">
        <name>Fe-coproporphyrin III</name>
        <dbReference type="ChEBI" id="CHEBI:68438"/>
    </cofactor>
    <text evidence="1">Fe-coproporphyrin III acts both as a substrate and a redox cofactor.</text>
</comment>
<comment type="pathway">
    <text evidence="1">Porphyrin-containing compound metabolism; protoheme biosynthesis.</text>
</comment>
<comment type="similarity">
    <text evidence="1">Belongs to the ChdC family. Type 1 subfamily.</text>
</comment>
<accession>Q5WB17</accession>
<protein>
    <recommendedName>
        <fullName evidence="1">Coproheme decarboxylase</fullName>
        <ecNumber evidence="1">1.3.98.5</ecNumber>
    </recommendedName>
    <alternativeName>
        <fullName evidence="1">Coproheme III oxidative decarboxylase</fullName>
    </alternativeName>
    <alternativeName>
        <fullName evidence="1">Hydrogen peroxide-dependent heme synthase</fullName>
    </alternativeName>
</protein>
<keyword id="KW-0349">Heme</keyword>
<keyword id="KW-0350">Heme biosynthesis</keyword>
<keyword id="KW-0408">Iron</keyword>
<keyword id="KW-0479">Metal-binding</keyword>
<keyword id="KW-0560">Oxidoreductase</keyword>
<keyword id="KW-1185">Reference proteome</keyword>
<sequence length="249" mass="29065">MNEAAKTLDGWYVLHDFRKIDWNSWKTVSASEREQMLNEFEALVSKWEGTEKAGKGSHALYSIVGQKADIMIMLLRPTMEELNEIENAFNKSGLAAYMIPTYSYVSVVELSNYLAGDSDEDPYENPYVRSRLYPELPRWKHVCFYPMDKRREGNDNWYMLPMEERKNLMRSHGMIGRGYAGVVKQIISGSVGFDDWEWGVTLFSDDVLQFKKLVYEMRFDEVSARYGEFGSFYVGNILEKERIPAYFHI</sequence>
<feature type="chain" id="PRO_0000294037" description="Coproheme decarboxylase">
    <location>
        <begin position="1"/>
        <end position="249"/>
    </location>
</feature>
<feature type="active site" evidence="1">
    <location>
        <position position="145"/>
    </location>
</feature>
<feature type="binding site" evidence="1">
    <location>
        <position position="131"/>
    </location>
    <ligand>
        <name>Fe-coproporphyrin III</name>
        <dbReference type="ChEBI" id="CHEBI:68438"/>
    </ligand>
</feature>
<feature type="binding site" evidence="1">
    <location>
        <begin position="145"/>
        <end position="149"/>
    </location>
    <ligand>
        <name>Fe-coproporphyrin III</name>
        <dbReference type="ChEBI" id="CHEBI:68438"/>
    </ligand>
</feature>
<feature type="binding site" description="axial binding residue" evidence="1">
    <location>
        <position position="172"/>
    </location>
    <ligand>
        <name>Fe-coproporphyrin III</name>
        <dbReference type="ChEBI" id="CHEBI:68438"/>
    </ligand>
    <ligandPart>
        <name>Fe</name>
        <dbReference type="ChEBI" id="CHEBI:18248"/>
    </ligandPart>
</feature>
<feature type="binding site" evidence="1">
    <location>
        <position position="185"/>
    </location>
    <ligand>
        <name>Fe-coproporphyrin III</name>
        <dbReference type="ChEBI" id="CHEBI:68438"/>
    </ligand>
</feature>
<feature type="binding site" evidence="1">
    <location>
        <position position="223"/>
    </location>
    <ligand>
        <name>Fe-coproporphyrin III</name>
        <dbReference type="ChEBI" id="CHEBI:68438"/>
    </ligand>
</feature>
<organism>
    <name type="scientific">Shouchella clausii (strain KSM-K16)</name>
    <name type="common">Alkalihalobacillus clausii</name>
    <dbReference type="NCBI Taxonomy" id="66692"/>
    <lineage>
        <taxon>Bacteria</taxon>
        <taxon>Bacillati</taxon>
        <taxon>Bacillota</taxon>
        <taxon>Bacilli</taxon>
        <taxon>Bacillales</taxon>
        <taxon>Bacillaceae</taxon>
        <taxon>Shouchella</taxon>
    </lineage>
</organism>
<gene>
    <name evidence="1" type="primary">chdC</name>
    <name type="ordered locus">ABC3912</name>
</gene>
<dbReference type="EC" id="1.3.98.5" evidence="1"/>
<dbReference type="EMBL" id="AP006627">
    <property type="protein sequence ID" value="BAD66443.1"/>
    <property type="molecule type" value="Genomic_DNA"/>
</dbReference>
<dbReference type="SMR" id="Q5WB17"/>
<dbReference type="STRING" id="66692.ABC3912"/>
<dbReference type="KEGG" id="bcl:ABC3912"/>
<dbReference type="eggNOG" id="COG3253">
    <property type="taxonomic scope" value="Bacteria"/>
</dbReference>
<dbReference type="HOGENOM" id="CLU_063226_1_0_9"/>
<dbReference type="OrthoDB" id="9773646at2"/>
<dbReference type="UniPathway" id="UPA00252"/>
<dbReference type="Proteomes" id="UP000001168">
    <property type="component" value="Chromosome"/>
</dbReference>
<dbReference type="GO" id="GO:0020037">
    <property type="term" value="F:heme binding"/>
    <property type="evidence" value="ECO:0007669"/>
    <property type="project" value="InterPro"/>
</dbReference>
<dbReference type="GO" id="GO:0046872">
    <property type="term" value="F:metal ion binding"/>
    <property type="evidence" value="ECO:0007669"/>
    <property type="project" value="UniProtKB-KW"/>
</dbReference>
<dbReference type="GO" id="GO:0016634">
    <property type="term" value="F:oxidoreductase activity, acting on the CH-CH group of donors, oxygen as acceptor"/>
    <property type="evidence" value="ECO:0007669"/>
    <property type="project" value="UniProtKB-UniRule"/>
</dbReference>
<dbReference type="GO" id="GO:0004601">
    <property type="term" value="F:peroxidase activity"/>
    <property type="evidence" value="ECO:0007669"/>
    <property type="project" value="InterPro"/>
</dbReference>
<dbReference type="GO" id="GO:0006785">
    <property type="term" value="P:heme B biosynthetic process"/>
    <property type="evidence" value="ECO:0007669"/>
    <property type="project" value="UniProtKB-UniRule"/>
</dbReference>
<dbReference type="Gene3D" id="3.30.70.1030">
    <property type="entry name" value="Apc35880, domain 1"/>
    <property type="match status" value="2"/>
</dbReference>
<dbReference type="HAMAP" id="MF_01442">
    <property type="entry name" value="Coproheme_decarbox_1"/>
    <property type="match status" value="1"/>
</dbReference>
<dbReference type="InterPro" id="IPR031332">
    <property type="entry name" value="CHDC"/>
</dbReference>
<dbReference type="InterPro" id="IPR010644">
    <property type="entry name" value="ChdC/CLD"/>
</dbReference>
<dbReference type="InterPro" id="IPR011008">
    <property type="entry name" value="Dimeric_a/b-barrel"/>
</dbReference>
<dbReference type="NCBIfam" id="NF008913">
    <property type="entry name" value="PRK12276.1"/>
    <property type="match status" value="1"/>
</dbReference>
<dbReference type="PANTHER" id="PTHR36843:SF1">
    <property type="entry name" value="COPROHEME DECARBOXYLASE"/>
    <property type="match status" value="1"/>
</dbReference>
<dbReference type="PANTHER" id="PTHR36843">
    <property type="entry name" value="HEME-DEPENDENT PEROXIDASE YWFI-RELATED"/>
    <property type="match status" value="1"/>
</dbReference>
<dbReference type="Pfam" id="PF06778">
    <property type="entry name" value="Chlor_dismutase"/>
    <property type="match status" value="1"/>
</dbReference>
<dbReference type="SUPFAM" id="SSF54909">
    <property type="entry name" value="Dimeric alpha+beta barrel"/>
    <property type="match status" value="1"/>
</dbReference>
<evidence type="ECO:0000255" key="1">
    <source>
        <dbReference type="HAMAP-Rule" id="MF_01442"/>
    </source>
</evidence>
<reference key="1">
    <citation type="submission" date="2003-10" db="EMBL/GenBank/DDBJ databases">
        <title>The complete genome sequence of the alkaliphilic Bacillus clausii KSM-K16.</title>
        <authorList>
            <person name="Takaki Y."/>
            <person name="Kageyama Y."/>
            <person name="Shimamura S."/>
            <person name="Suzuki H."/>
            <person name="Nishi S."/>
            <person name="Hatada Y."/>
            <person name="Kawai S."/>
            <person name="Ito S."/>
            <person name="Horikoshi K."/>
        </authorList>
    </citation>
    <scope>NUCLEOTIDE SEQUENCE [LARGE SCALE GENOMIC DNA]</scope>
    <source>
        <strain>KSM-K16</strain>
    </source>
</reference>
<name>CHDC_SHOC1</name>
<proteinExistence type="inferred from homology"/>